<protein>
    <recommendedName>
        <fullName evidence="1">Putative nickel-responsive regulator</fullName>
    </recommendedName>
</protein>
<evidence type="ECO:0000255" key="1">
    <source>
        <dbReference type="HAMAP-Rule" id="MF_00476"/>
    </source>
</evidence>
<proteinExistence type="inferred from homology"/>
<dbReference type="EMBL" id="CP001251">
    <property type="protein sequence ID" value="ACK43040.1"/>
    <property type="molecule type" value="Genomic_DNA"/>
</dbReference>
<dbReference type="RefSeq" id="YP_002353654.1">
    <property type="nucleotide sequence ID" value="NC_011661.1"/>
</dbReference>
<dbReference type="SMR" id="B8E0M0"/>
<dbReference type="STRING" id="515635.Dtur_1768"/>
<dbReference type="EnsemblBacteria" id="ACK43040">
    <property type="protein sequence ID" value="ACK43040"/>
    <property type="gene ID" value="Dtur_1768"/>
</dbReference>
<dbReference type="KEGG" id="dtu:Dtur_1768"/>
<dbReference type="PATRIC" id="fig|515635.4.peg.1820"/>
<dbReference type="eggNOG" id="COG0864">
    <property type="taxonomic scope" value="Bacteria"/>
</dbReference>
<dbReference type="HOGENOM" id="CLU_113319_1_2_0"/>
<dbReference type="InParanoid" id="B8E0M0"/>
<dbReference type="OrthoDB" id="9806294at2"/>
<dbReference type="Proteomes" id="UP000007719">
    <property type="component" value="Chromosome"/>
</dbReference>
<dbReference type="GO" id="GO:0003677">
    <property type="term" value="F:DNA binding"/>
    <property type="evidence" value="ECO:0000318"/>
    <property type="project" value="GO_Central"/>
</dbReference>
<dbReference type="GO" id="GO:0003700">
    <property type="term" value="F:DNA-binding transcription factor activity"/>
    <property type="evidence" value="ECO:0007669"/>
    <property type="project" value="UniProtKB-UniRule"/>
</dbReference>
<dbReference type="GO" id="GO:0016151">
    <property type="term" value="F:nickel cation binding"/>
    <property type="evidence" value="ECO:0007669"/>
    <property type="project" value="UniProtKB-UniRule"/>
</dbReference>
<dbReference type="GO" id="GO:0006355">
    <property type="term" value="P:regulation of DNA-templated transcription"/>
    <property type="evidence" value="ECO:0000318"/>
    <property type="project" value="GO_Central"/>
</dbReference>
<dbReference type="GO" id="GO:0010045">
    <property type="term" value="P:response to nickel cation"/>
    <property type="evidence" value="ECO:0007669"/>
    <property type="project" value="InterPro"/>
</dbReference>
<dbReference type="CDD" id="cd22231">
    <property type="entry name" value="RHH_NikR_HicB-like"/>
    <property type="match status" value="1"/>
</dbReference>
<dbReference type="Gene3D" id="3.30.70.1150">
    <property type="entry name" value="ACT-like. Chain A, domain 2"/>
    <property type="match status" value="1"/>
</dbReference>
<dbReference type="Gene3D" id="1.10.1220.10">
    <property type="entry name" value="Met repressor-like"/>
    <property type="match status" value="1"/>
</dbReference>
<dbReference type="HAMAP" id="MF_00476">
    <property type="entry name" value="NikR"/>
    <property type="match status" value="1"/>
</dbReference>
<dbReference type="InterPro" id="IPR027271">
    <property type="entry name" value="Acetolactate_synth/TF_NikR_C"/>
</dbReference>
<dbReference type="InterPro" id="IPR045865">
    <property type="entry name" value="ACT-like_dom_sf"/>
</dbReference>
<dbReference type="InterPro" id="IPR013321">
    <property type="entry name" value="Arc_rbn_hlx_hlx"/>
</dbReference>
<dbReference type="InterPro" id="IPR002145">
    <property type="entry name" value="CopG"/>
</dbReference>
<dbReference type="InterPro" id="IPR050192">
    <property type="entry name" value="CopG/NikR_regulator"/>
</dbReference>
<dbReference type="InterPro" id="IPR022988">
    <property type="entry name" value="Ni_resp_reg_NikR"/>
</dbReference>
<dbReference type="InterPro" id="IPR010985">
    <property type="entry name" value="Ribbon_hlx_hlx"/>
</dbReference>
<dbReference type="InterPro" id="IPR014864">
    <property type="entry name" value="TF_NikR_Ni-bd_C"/>
</dbReference>
<dbReference type="NCBIfam" id="NF001884">
    <property type="entry name" value="PRK00630.1"/>
    <property type="match status" value="1"/>
</dbReference>
<dbReference type="NCBIfam" id="NF002169">
    <property type="entry name" value="PRK01002.1"/>
    <property type="match status" value="1"/>
</dbReference>
<dbReference type="NCBIfam" id="NF002815">
    <property type="entry name" value="PRK02967.1"/>
    <property type="match status" value="1"/>
</dbReference>
<dbReference type="NCBIfam" id="NF003381">
    <property type="entry name" value="PRK04460.1"/>
    <property type="match status" value="1"/>
</dbReference>
<dbReference type="PANTHER" id="PTHR34719">
    <property type="entry name" value="NICKEL-RESPONSIVE REGULATOR"/>
    <property type="match status" value="1"/>
</dbReference>
<dbReference type="PANTHER" id="PTHR34719:SF2">
    <property type="entry name" value="NICKEL-RESPONSIVE REGULATOR"/>
    <property type="match status" value="1"/>
</dbReference>
<dbReference type="Pfam" id="PF08753">
    <property type="entry name" value="NikR_C"/>
    <property type="match status" value="1"/>
</dbReference>
<dbReference type="Pfam" id="PF01402">
    <property type="entry name" value="RHH_1"/>
    <property type="match status" value="1"/>
</dbReference>
<dbReference type="SUPFAM" id="SSF55021">
    <property type="entry name" value="ACT-like"/>
    <property type="match status" value="1"/>
</dbReference>
<dbReference type="SUPFAM" id="SSF47598">
    <property type="entry name" value="Ribbon-helix-helix"/>
    <property type="match status" value="1"/>
</dbReference>
<sequence length="135" mass="15890">MAKIVRFGVSIEEDLLENFDKIIEDKGYNSRSEAIRDLIRDYIIKEKWNLKKEKVAGSISLIYEHDVYGLSEKLTDIQHHYHDVIISTLHVHLDEKNCMEVILVRGKVEKIKRLYDELSSLKWVRHTNIAITDII</sequence>
<name>NIKR_DICTD</name>
<feature type="chain" id="PRO_1000125815" description="Putative nickel-responsive regulator">
    <location>
        <begin position="1"/>
        <end position="135"/>
    </location>
</feature>
<feature type="binding site" evidence="1">
    <location>
        <position position="79"/>
    </location>
    <ligand>
        <name>Ni(2+)</name>
        <dbReference type="ChEBI" id="CHEBI:49786"/>
    </ligand>
</feature>
<feature type="binding site" evidence="1">
    <location>
        <position position="90"/>
    </location>
    <ligand>
        <name>Ni(2+)</name>
        <dbReference type="ChEBI" id="CHEBI:49786"/>
    </ligand>
</feature>
<feature type="binding site" evidence="1">
    <location>
        <position position="92"/>
    </location>
    <ligand>
        <name>Ni(2+)</name>
        <dbReference type="ChEBI" id="CHEBI:49786"/>
    </ligand>
</feature>
<feature type="binding site" evidence="1">
    <location>
        <position position="98"/>
    </location>
    <ligand>
        <name>Ni(2+)</name>
        <dbReference type="ChEBI" id="CHEBI:49786"/>
    </ligand>
</feature>
<reference key="1">
    <citation type="journal article" date="2016" name="Front. Microbiol.">
        <title>The complete genome sequence of hyperthermophile Dictyoglomus turgidum DSM 6724 reveals a specialized carbohydrate fermentor.</title>
        <authorList>
            <person name="Brumm P.J."/>
            <person name="Gowda K."/>
            <person name="Robb F.T."/>
            <person name="Mead D.A."/>
        </authorList>
    </citation>
    <scope>NUCLEOTIDE SEQUENCE [LARGE SCALE GENOMIC DNA]</scope>
    <source>
        <strain>DSM 6724 / Z-1310</strain>
    </source>
</reference>
<organism>
    <name type="scientific">Dictyoglomus turgidum (strain DSM 6724 / Z-1310)</name>
    <dbReference type="NCBI Taxonomy" id="515635"/>
    <lineage>
        <taxon>Bacteria</taxon>
        <taxon>Pseudomonadati</taxon>
        <taxon>Dictyoglomota</taxon>
        <taxon>Dictyoglomia</taxon>
        <taxon>Dictyoglomales</taxon>
        <taxon>Dictyoglomaceae</taxon>
        <taxon>Dictyoglomus</taxon>
    </lineage>
</organism>
<gene>
    <name type="ordered locus">Dtur_1768</name>
</gene>
<comment type="function">
    <text evidence="1">Transcriptional regulator.</text>
</comment>
<comment type="cofactor">
    <cofactor evidence="1">
        <name>Ni(2+)</name>
        <dbReference type="ChEBI" id="CHEBI:49786"/>
    </cofactor>
    <text evidence="1">Binds 1 nickel ion per subunit.</text>
</comment>
<comment type="similarity">
    <text evidence="1">Belongs to the transcriptional regulatory CopG/NikR family.</text>
</comment>
<keyword id="KW-0238">DNA-binding</keyword>
<keyword id="KW-0479">Metal-binding</keyword>
<keyword id="KW-0533">Nickel</keyword>
<keyword id="KW-1185">Reference proteome</keyword>
<keyword id="KW-0804">Transcription</keyword>
<keyword id="KW-0805">Transcription regulation</keyword>
<accession>B8E0M0</accession>